<organism>
    <name type="scientific">Sus scrofa</name>
    <name type="common">Pig</name>
    <dbReference type="NCBI Taxonomy" id="9823"/>
    <lineage>
        <taxon>Eukaryota</taxon>
        <taxon>Metazoa</taxon>
        <taxon>Chordata</taxon>
        <taxon>Craniata</taxon>
        <taxon>Vertebrata</taxon>
        <taxon>Euteleostomi</taxon>
        <taxon>Mammalia</taxon>
        <taxon>Eutheria</taxon>
        <taxon>Laurasiatheria</taxon>
        <taxon>Artiodactyla</taxon>
        <taxon>Suina</taxon>
        <taxon>Suidae</taxon>
        <taxon>Sus</taxon>
    </lineage>
</organism>
<feature type="chain" id="PRO_0000172511" description="P protein">
    <location>
        <begin position="1"/>
        <end position="845"/>
    </location>
</feature>
<feature type="topological domain" description="Extracellular" evidence="3">
    <location>
        <begin position="1"/>
        <end position="183"/>
    </location>
</feature>
<feature type="transmembrane region" description="Helical" evidence="3">
    <location>
        <begin position="184"/>
        <end position="204"/>
    </location>
</feature>
<feature type="topological domain" description="Cytoplasmic" evidence="3">
    <location>
        <begin position="205"/>
        <end position="337"/>
    </location>
</feature>
<feature type="transmembrane region" description="Helical" evidence="3">
    <location>
        <begin position="338"/>
        <end position="358"/>
    </location>
</feature>
<feature type="topological domain" description="Extracellular" evidence="3">
    <location>
        <begin position="359"/>
        <end position="360"/>
    </location>
</feature>
<feature type="transmembrane region" description="Helical" evidence="3">
    <location>
        <begin position="361"/>
        <end position="381"/>
    </location>
</feature>
<feature type="topological domain" description="Cytoplasmic" evidence="3">
    <location>
        <begin position="382"/>
        <end position="393"/>
    </location>
</feature>
<feature type="transmembrane region" description="Helical" evidence="3">
    <location>
        <begin position="394"/>
        <end position="414"/>
    </location>
</feature>
<feature type="topological domain" description="Extracellular" evidence="3">
    <location>
        <begin position="415"/>
        <end position="429"/>
    </location>
</feature>
<feature type="transmembrane region" description="Helical" evidence="3">
    <location>
        <begin position="430"/>
        <end position="450"/>
    </location>
</feature>
<feature type="topological domain" description="Cytoplasmic" evidence="3">
    <location>
        <begin position="451"/>
        <end position="513"/>
    </location>
</feature>
<feature type="transmembrane region" description="Helical" evidence="3">
    <location>
        <begin position="514"/>
        <end position="534"/>
    </location>
</feature>
<feature type="topological domain" description="Extracellular" evidence="3">
    <location>
        <begin position="535"/>
        <end position="629"/>
    </location>
</feature>
<feature type="transmembrane region" description="Helical" evidence="3">
    <location>
        <begin position="630"/>
        <end position="650"/>
    </location>
</feature>
<feature type="topological domain" description="Cytoplasmic" evidence="3">
    <location>
        <position position="651"/>
    </location>
</feature>
<feature type="transmembrane region" description="Helical" evidence="3">
    <location>
        <begin position="652"/>
        <end position="672"/>
    </location>
</feature>
<feature type="topological domain" description="Extracellular" evidence="3">
    <location>
        <begin position="673"/>
        <end position="687"/>
    </location>
</feature>
<feature type="transmembrane region" description="Helical" evidence="3">
    <location>
        <begin position="688"/>
        <end position="708"/>
    </location>
</feature>
<feature type="topological domain" description="Cytoplasmic" evidence="3">
    <location>
        <begin position="709"/>
        <end position="730"/>
    </location>
</feature>
<feature type="transmembrane region" description="Helical" evidence="3">
    <location>
        <begin position="731"/>
        <end position="751"/>
    </location>
</feature>
<feature type="topological domain" description="Extracellular" evidence="3">
    <location>
        <begin position="752"/>
        <end position="773"/>
    </location>
</feature>
<feature type="transmembrane region" description="Helical" evidence="3">
    <location>
        <begin position="774"/>
        <end position="794"/>
    </location>
</feature>
<feature type="topological domain" description="Cytoplasmic" evidence="3">
    <location>
        <begin position="795"/>
        <end position="820"/>
    </location>
</feature>
<feature type="transmembrane region" description="Helical" evidence="3">
    <location>
        <begin position="821"/>
        <end position="841"/>
    </location>
</feature>
<feature type="topological domain" description="Extracellular" evidence="3">
    <location>
        <begin position="842"/>
        <end position="845"/>
    </location>
</feature>
<feature type="region of interest" description="Disordered" evidence="4">
    <location>
        <begin position="1"/>
        <end position="57"/>
    </location>
</feature>
<feature type="compositionally biased region" description="Low complexity" evidence="4">
    <location>
        <begin position="26"/>
        <end position="40"/>
    </location>
</feature>
<feature type="sequence variant" evidence="5">
    <original>R</original>
    <variation>H</variation>
    <location>
        <position position="573"/>
    </location>
</feature>
<evidence type="ECO:0000250" key="1">
    <source>
        <dbReference type="UniProtKB" id="Q04671"/>
    </source>
</evidence>
<evidence type="ECO:0000250" key="2">
    <source>
        <dbReference type="UniProtKB" id="Q62052"/>
    </source>
</evidence>
<evidence type="ECO:0000255" key="3"/>
<evidence type="ECO:0000256" key="4">
    <source>
        <dbReference type="SAM" id="MobiDB-lite"/>
    </source>
</evidence>
<evidence type="ECO:0000269" key="5">
    <source>
    </source>
</evidence>
<evidence type="ECO:0000305" key="6"/>
<proteinExistence type="evidence at transcript level"/>
<accession>Q8MIQ9</accession>
<reference key="1">
    <citation type="journal article" date="2002" name="Anim. Genet.">
        <title>Physical and linkage mapping of the porcine pink-eye dilution gene (OCA2).</title>
        <authorList>
            <person name="Fernandez A."/>
            <person name="Castellanos C."/>
            <person name="Rodriguez C."/>
            <person name="Noguera J.L."/>
            <person name="Sanchez A."/>
            <person name="Ovilo C."/>
        </authorList>
    </citation>
    <scope>NUCLEOTIDE SEQUENCE [MRNA]</scope>
    <scope>VARIANT HIS-573</scope>
</reference>
<reference key="2">
    <citation type="submission" date="2005-07" db="EMBL/GenBank/DDBJ databases">
        <authorList>
            <person name="Fernandez A."/>
            <person name="Castellanos C."/>
            <person name="Rodriguez M."/>
            <person name="Noguera J.L."/>
            <person name="Sanchez A."/>
            <person name="Silio L.L."/>
            <person name="Ovilo C."/>
        </authorList>
    </citation>
    <scope>SEQUENCE REVISION TO 634</scope>
</reference>
<sequence>MRLENREGRPTSGVLEMELPQASAPSRAGLGSLGLVGLDSSNHRPQQGGSKAGSRGPYLSGAAGQSCWVPMDQDFGPFLTERRSHCPFPKHFSSRSKDPCFTENTPLLGSFSQEEGSRCIPVYRPEFITADEPWENSSAEWEGGALLSTELAVSSGSASTEKGELLDSAHIRCHLSKLRCCVQWLKVSGLFVFVVLCSILFSLYPDQGKFWQLLAVSPLESYSVNLSSHADSMLLQVDLAGALVASGPSHLGKEEHVAVEVTQANAPGSRRRRPQQVTHNWTIFLNPSGGEHTVMSRTFEVLSREPVSINIRASLQQTQIVPLLMAHQYLRASIEAQVTIAAVILAGVYVLIIFEIVHRTLAAMLGSLAALAALAVIGDRPTLTQVVEWIDFETLALLFGMMILVAIFSETGFFDYCAVKAYQLSRGRVWAMIIMLCLIAAVLSAFLDNVTTALLFTPVTIRLCEVLNLDPRQVLIAEVIFTNIGGAATAIGDPPNVIIVSNQELRKMGLDFAGFTAHMFAGICFVLLFSFPLLRLLYWNRKLYNKEPSEIVELKHEIHVWRLTAQRISPASREETAVRGLLLEKVLSLERLLARRLHSFHRQISQEDKNWETNIQELQKKHRISDRTLLTKCVTVLGLVIFMFFLNSFVPGVHLDLGWIAILGAIWLLILADIHDFEIILHRVEWATLLFFAALFILMEALAHLHLIEYVGEQTALLIKMVPEDQRLAAAIIVVVWVSAIASSLIDNIPFTATMIPVLLNLSRDPEISLPAPPLMYALALGACLGGNGTLIGASANVVCAGIAEQHGYGFSFMEFFRLGFPMMVVSCMVGMCYLLVAHVVMGWN</sequence>
<comment type="function">
    <text evidence="1 2">Contributes to a melanosome-specific anion (chloride) current that modulates melanosomal pH for optimal tyrosinase activity required for melanogenesis and the melanosome maturation. One of the components of the mammalian pigmentary system. May serve as a key control point at which ethnic skin color variation is determined. Major determinant of brown and/or blue eye color (By similarity). Seems to regulate the post-translational processing of tyrosinase, which catalyzes the limiting reaction in melanin synthesis (By similarity).</text>
</comment>
<comment type="catalytic activity">
    <reaction evidence="1">
        <text>chloride(in) = chloride(out)</text>
        <dbReference type="Rhea" id="RHEA:29823"/>
        <dbReference type="ChEBI" id="CHEBI:17996"/>
    </reaction>
</comment>
<comment type="subcellular location">
    <subcellularLocation>
        <location evidence="1">Melanosome membrane</location>
        <topology evidence="1">Multi-pass membrane protein</topology>
    </subcellularLocation>
</comment>
<comment type="similarity">
    <text evidence="6">Belongs to the CitM (TC 2.A.11) transporter family.</text>
</comment>
<comment type="online information" name="Protein Spotlight">
    <link uri="https://www.proteinspotlight.org/back_issues/054"/>
    <text>Questioning colour - Issue 54 of January 2005</text>
</comment>
<protein>
    <recommendedName>
        <fullName>P protein</fullName>
    </recommendedName>
    <alternativeName>
        <fullName>Melanocyte-specific transporter protein</fullName>
    </alternativeName>
    <alternativeName>
        <fullName>Pink-eyed dilution protein homolog</fullName>
    </alternativeName>
</protein>
<name>P_PIG</name>
<dbReference type="EMBL" id="AY095536">
    <property type="protein sequence ID" value="AAM34404.3"/>
    <property type="molecule type" value="mRNA"/>
</dbReference>
<dbReference type="RefSeq" id="NP_999259.2">
    <property type="nucleotide sequence ID" value="NM_214094.2"/>
</dbReference>
<dbReference type="SMR" id="Q8MIQ9"/>
<dbReference type="FunCoup" id="Q8MIQ9">
    <property type="interactions" value="72"/>
</dbReference>
<dbReference type="PaxDb" id="9823-ENSSSCP00000016801"/>
<dbReference type="GeneID" id="397171"/>
<dbReference type="KEGG" id="ssc:397171"/>
<dbReference type="CTD" id="4948"/>
<dbReference type="eggNOG" id="KOG2639">
    <property type="taxonomic scope" value="Eukaryota"/>
</dbReference>
<dbReference type="InParanoid" id="Q8MIQ9"/>
<dbReference type="OrthoDB" id="442352at2759"/>
<dbReference type="Proteomes" id="UP000008227">
    <property type="component" value="Unplaced"/>
</dbReference>
<dbReference type="Proteomes" id="UP000314985">
    <property type="component" value="Unplaced"/>
</dbReference>
<dbReference type="Proteomes" id="UP000694570">
    <property type="component" value="Unplaced"/>
</dbReference>
<dbReference type="Proteomes" id="UP000694571">
    <property type="component" value="Unplaced"/>
</dbReference>
<dbReference type="Proteomes" id="UP000694720">
    <property type="component" value="Unplaced"/>
</dbReference>
<dbReference type="Proteomes" id="UP000694722">
    <property type="component" value="Unplaced"/>
</dbReference>
<dbReference type="Proteomes" id="UP000694723">
    <property type="component" value="Unplaced"/>
</dbReference>
<dbReference type="Proteomes" id="UP000694724">
    <property type="component" value="Unplaced"/>
</dbReference>
<dbReference type="Proteomes" id="UP000694725">
    <property type="component" value="Unplaced"/>
</dbReference>
<dbReference type="Proteomes" id="UP000694726">
    <property type="component" value="Unplaced"/>
</dbReference>
<dbReference type="Proteomes" id="UP000694727">
    <property type="component" value="Unplaced"/>
</dbReference>
<dbReference type="Proteomes" id="UP000694728">
    <property type="component" value="Unplaced"/>
</dbReference>
<dbReference type="GO" id="GO:0033162">
    <property type="term" value="C:melanosome membrane"/>
    <property type="evidence" value="ECO:0000318"/>
    <property type="project" value="GO_Central"/>
</dbReference>
<dbReference type="GO" id="GO:0005254">
    <property type="term" value="F:chloride channel activity"/>
    <property type="evidence" value="ECO:0000250"/>
    <property type="project" value="UniProtKB"/>
</dbReference>
<dbReference type="GO" id="GO:0035752">
    <property type="term" value="P:lysosomal lumen pH elevation"/>
    <property type="evidence" value="ECO:0000250"/>
    <property type="project" value="UniProtKB"/>
</dbReference>
<dbReference type="GO" id="GO:0042438">
    <property type="term" value="P:melanin biosynthetic process"/>
    <property type="evidence" value="ECO:0000318"/>
    <property type="project" value="GO_Central"/>
</dbReference>
<dbReference type="GO" id="GO:0006583">
    <property type="term" value="P:melanin biosynthetic process from tyrosine"/>
    <property type="evidence" value="ECO:0000250"/>
    <property type="project" value="UniProtKB"/>
</dbReference>
<dbReference type="GO" id="GO:0030318">
    <property type="term" value="P:melanocyte differentiation"/>
    <property type="evidence" value="ECO:0000318"/>
    <property type="project" value="GO_Central"/>
</dbReference>
<dbReference type="CDD" id="cd01116">
    <property type="entry name" value="P_permease"/>
    <property type="match status" value="1"/>
</dbReference>
<dbReference type="InterPro" id="IPR004680">
    <property type="entry name" value="Cit_transptr-like_dom"/>
</dbReference>
<dbReference type="InterPro" id="IPR051475">
    <property type="entry name" value="Diverse_Ion_Transporter"/>
</dbReference>
<dbReference type="PANTHER" id="PTHR43568">
    <property type="entry name" value="P PROTEIN"/>
    <property type="match status" value="1"/>
</dbReference>
<dbReference type="PANTHER" id="PTHR43568:SF1">
    <property type="entry name" value="P PROTEIN"/>
    <property type="match status" value="1"/>
</dbReference>
<dbReference type="Pfam" id="PF03600">
    <property type="entry name" value="CitMHS"/>
    <property type="match status" value="1"/>
</dbReference>
<gene>
    <name type="primary">Oca2</name>
    <name type="synonym">P</name>
</gene>
<keyword id="KW-0472">Membrane</keyword>
<keyword id="KW-1185">Reference proteome</keyword>
<keyword id="KW-0812">Transmembrane</keyword>
<keyword id="KW-1133">Transmembrane helix</keyword>
<keyword id="KW-0813">Transport</keyword>